<reference key="1">
    <citation type="journal article" date="2003" name="Lancet">
        <title>Genome sequence of Vibrio parahaemolyticus: a pathogenic mechanism distinct from that of V. cholerae.</title>
        <authorList>
            <person name="Makino K."/>
            <person name="Oshima K."/>
            <person name="Kurokawa K."/>
            <person name="Yokoyama K."/>
            <person name="Uda T."/>
            <person name="Tagomori K."/>
            <person name="Iijima Y."/>
            <person name="Najima M."/>
            <person name="Nakano M."/>
            <person name="Yamashita A."/>
            <person name="Kubota Y."/>
            <person name="Kimura S."/>
            <person name="Yasunaga T."/>
            <person name="Honda T."/>
            <person name="Shinagawa H."/>
            <person name="Hattori M."/>
            <person name="Iida T."/>
        </authorList>
    </citation>
    <scope>NUCLEOTIDE SEQUENCE [LARGE SCALE GENOMIC DNA]</scope>
    <source>
        <strain>RIMD 2210633</strain>
    </source>
</reference>
<protein>
    <recommendedName>
        <fullName evidence="1">Ribosomal RNA large subunit methyltransferase M</fullName>
        <ecNumber evidence="1">2.1.1.186</ecNumber>
    </recommendedName>
    <alternativeName>
        <fullName evidence="1">23S rRNA (cytidine2498-2'-O)-methyltransferase</fullName>
    </alternativeName>
    <alternativeName>
        <fullName evidence="1">23S rRNA 2'-O-ribose methyltransferase RlmM</fullName>
    </alternativeName>
</protein>
<feature type="chain" id="PRO_0000070430" description="Ribosomal RNA large subunit methyltransferase M">
    <location>
        <begin position="1"/>
        <end position="359"/>
    </location>
</feature>
<feature type="active site" description="Proton acceptor" evidence="1">
    <location>
        <position position="304"/>
    </location>
</feature>
<feature type="binding site" evidence="1">
    <location>
        <position position="186"/>
    </location>
    <ligand>
        <name>S-adenosyl-L-methionine</name>
        <dbReference type="ChEBI" id="CHEBI:59789"/>
    </ligand>
</feature>
<feature type="binding site" evidence="1">
    <location>
        <begin position="219"/>
        <end position="222"/>
    </location>
    <ligand>
        <name>S-adenosyl-L-methionine</name>
        <dbReference type="ChEBI" id="CHEBI:59789"/>
    </ligand>
</feature>
<feature type="binding site" evidence="1">
    <location>
        <position position="238"/>
    </location>
    <ligand>
        <name>S-adenosyl-L-methionine</name>
        <dbReference type="ChEBI" id="CHEBI:59789"/>
    </ligand>
</feature>
<feature type="binding site" evidence="1">
    <location>
        <position position="258"/>
    </location>
    <ligand>
        <name>S-adenosyl-L-methionine</name>
        <dbReference type="ChEBI" id="CHEBI:59789"/>
    </ligand>
</feature>
<feature type="binding site" evidence="1">
    <location>
        <position position="275"/>
    </location>
    <ligand>
        <name>S-adenosyl-L-methionine</name>
        <dbReference type="ChEBI" id="CHEBI:59789"/>
    </ligand>
</feature>
<evidence type="ECO:0000255" key="1">
    <source>
        <dbReference type="HAMAP-Rule" id="MF_01551"/>
    </source>
</evidence>
<evidence type="ECO:0000305" key="2"/>
<sequence>MLYCRSGFEKECAGEIQDKATQLEVYGFPRVKKNSGYVVFECYQDGDAEKLVKGLDFSSLIFARQMFAVAAEFEALPSEDRISPILAELSEFESFPRCGDLRIETPDTNEAKELLKFCRKFTVPMRQALRGKGLMWNKDNAKKPVLHICFVAPGHCYVGYSLPGNNSQFFMGIPRLKFPADAPSRSTLKLEEAFHVFIPRDEWDERLAPGMWGVDLGACPGGWTYQLVKRSMFVHCVDNGMMADSLMETGQIKHHMVDGFKFEPDRKNVTWIVCDMVEKPARVAHLMGQWLLKGWAKEAIFNLKLPMKGRYDEVLQDLENLKMFLIENKVKFKLQAKHLYHDREEITIHIQCLSNISPH</sequence>
<gene>
    <name evidence="1" type="primary">rlmM</name>
    <name type="ordered locus">VP0695</name>
</gene>
<name>RLMM_VIBPA</name>
<proteinExistence type="inferred from homology"/>
<comment type="function">
    <text evidence="1">Catalyzes the 2'-O-methylation at nucleotide C2498 in 23S rRNA.</text>
</comment>
<comment type="catalytic activity">
    <reaction evidence="1">
        <text>cytidine(2498) in 23S rRNA + S-adenosyl-L-methionine = 2'-O-methylcytidine(2498) in 23S rRNA + S-adenosyl-L-homocysteine + H(+)</text>
        <dbReference type="Rhea" id="RHEA:42788"/>
        <dbReference type="Rhea" id="RHEA-COMP:10244"/>
        <dbReference type="Rhea" id="RHEA-COMP:10245"/>
        <dbReference type="ChEBI" id="CHEBI:15378"/>
        <dbReference type="ChEBI" id="CHEBI:57856"/>
        <dbReference type="ChEBI" id="CHEBI:59789"/>
        <dbReference type="ChEBI" id="CHEBI:74495"/>
        <dbReference type="ChEBI" id="CHEBI:82748"/>
        <dbReference type="EC" id="2.1.1.186"/>
    </reaction>
</comment>
<comment type="subunit">
    <text evidence="1">Monomer.</text>
</comment>
<comment type="subcellular location">
    <subcellularLocation>
        <location evidence="1">Cytoplasm</location>
    </subcellularLocation>
</comment>
<comment type="similarity">
    <text evidence="1">Belongs to the class I-like SAM-binding methyltransferase superfamily. RNA methyltransferase RlmE family. RlmM subfamily.</text>
</comment>
<comment type="sequence caution" evidence="2">
    <conflict type="erroneous initiation">
        <sequence resource="EMBL-CDS" id="BAC58958"/>
    </conflict>
</comment>
<keyword id="KW-0963">Cytoplasm</keyword>
<keyword id="KW-0489">Methyltransferase</keyword>
<keyword id="KW-0698">rRNA processing</keyword>
<keyword id="KW-0949">S-adenosyl-L-methionine</keyword>
<keyword id="KW-0808">Transferase</keyword>
<dbReference type="EC" id="2.1.1.186" evidence="1"/>
<dbReference type="EMBL" id="BA000031">
    <property type="protein sequence ID" value="BAC58958.1"/>
    <property type="status" value="ALT_INIT"/>
    <property type="molecule type" value="Genomic_DNA"/>
</dbReference>
<dbReference type="RefSeq" id="NP_797074.1">
    <property type="nucleotide sequence ID" value="NC_004603.1"/>
</dbReference>
<dbReference type="SMR" id="Q87RT2"/>
<dbReference type="DNASU" id="1188170"/>
<dbReference type="KEGG" id="vpa:VP0695"/>
<dbReference type="PATRIC" id="fig|223926.6.peg.664"/>
<dbReference type="eggNOG" id="COG2933">
    <property type="taxonomic scope" value="Bacteria"/>
</dbReference>
<dbReference type="HOGENOM" id="CLU_043780_0_0_6"/>
<dbReference type="Proteomes" id="UP000002493">
    <property type="component" value="Chromosome 1"/>
</dbReference>
<dbReference type="GO" id="GO:0005737">
    <property type="term" value="C:cytoplasm"/>
    <property type="evidence" value="ECO:0007669"/>
    <property type="project" value="UniProtKB-SubCell"/>
</dbReference>
<dbReference type="GO" id="GO:0008757">
    <property type="term" value="F:S-adenosylmethionine-dependent methyltransferase activity"/>
    <property type="evidence" value="ECO:0007669"/>
    <property type="project" value="UniProtKB-UniRule"/>
</dbReference>
<dbReference type="GO" id="GO:0032259">
    <property type="term" value="P:methylation"/>
    <property type="evidence" value="ECO:0007669"/>
    <property type="project" value="UniProtKB-KW"/>
</dbReference>
<dbReference type="GO" id="GO:0006364">
    <property type="term" value="P:rRNA processing"/>
    <property type="evidence" value="ECO:0007669"/>
    <property type="project" value="UniProtKB-UniRule"/>
</dbReference>
<dbReference type="Gene3D" id="3.30.2300.20">
    <property type="match status" value="1"/>
</dbReference>
<dbReference type="Gene3D" id="3.30.70.2810">
    <property type="match status" value="1"/>
</dbReference>
<dbReference type="Gene3D" id="3.40.50.150">
    <property type="entry name" value="Vaccinia Virus protein VP39"/>
    <property type="match status" value="1"/>
</dbReference>
<dbReference type="HAMAP" id="MF_01551">
    <property type="entry name" value="23SrRNA_methyltr_M"/>
    <property type="match status" value="1"/>
</dbReference>
<dbReference type="InterPro" id="IPR040739">
    <property type="entry name" value="RlmM_FDX"/>
</dbReference>
<dbReference type="InterPro" id="IPR048646">
    <property type="entry name" value="RlmM_THUMP-like"/>
</dbReference>
<dbReference type="InterPro" id="IPR002877">
    <property type="entry name" value="RNA_MeTrfase_FtsJ_dom"/>
</dbReference>
<dbReference type="InterPro" id="IPR011224">
    <property type="entry name" value="rRNA_MeTrfase_M"/>
</dbReference>
<dbReference type="InterPro" id="IPR029063">
    <property type="entry name" value="SAM-dependent_MTases_sf"/>
</dbReference>
<dbReference type="NCBIfam" id="NF008734">
    <property type="entry name" value="PRK11760.1"/>
    <property type="match status" value="1"/>
</dbReference>
<dbReference type="PANTHER" id="PTHR37524">
    <property type="entry name" value="RIBOSOMAL RNA LARGE SUBUNIT METHYLTRANSFERASE M"/>
    <property type="match status" value="1"/>
</dbReference>
<dbReference type="PANTHER" id="PTHR37524:SF2">
    <property type="entry name" value="RIBOSOMAL RNA METHYLTRANSFERASE FTSJ DOMAIN-CONTAINING PROTEIN"/>
    <property type="match status" value="1"/>
</dbReference>
<dbReference type="Pfam" id="PF01728">
    <property type="entry name" value="FtsJ"/>
    <property type="match status" value="1"/>
</dbReference>
<dbReference type="Pfam" id="PF18125">
    <property type="entry name" value="RlmM_FDX"/>
    <property type="match status" value="1"/>
</dbReference>
<dbReference type="Pfam" id="PF21239">
    <property type="entry name" value="RLMM_N"/>
    <property type="match status" value="1"/>
</dbReference>
<dbReference type="PIRSF" id="PIRSF028774">
    <property type="entry name" value="UCP028774"/>
    <property type="match status" value="1"/>
</dbReference>
<dbReference type="SUPFAM" id="SSF53335">
    <property type="entry name" value="S-adenosyl-L-methionine-dependent methyltransferases"/>
    <property type="match status" value="1"/>
</dbReference>
<accession>Q87RT2</accession>
<organism>
    <name type="scientific">Vibrio parahaemolyticus serotype O3:K6 (strain RIMD 2210633)</name>
    <dbReference type="NCBI Taxonomy" id="223926"/>
    <lineage>
        <taxon>Bacteria</taxon>
        <taxon>Pseudomonadati</taxon>
        <taxon>Pseudomonadota</taxon>
        <taxon>Gammaproteobacteria</taxon>
        <taxon>Vibrionales</taxon>
        <taxon>Vibrionaceae</taxon>
        <taxon>Vibrio</taxon>
    </lineage>
</organism>